<organism>
    <name type="scientific">Carnation mottle virus (isolate China/Shanghai)</name>
    <name type="common">CarMV</name>
    <dbReference type="NCBI Taxonomy" id="652111"/>
    <lineage>
        <taxon>Viruses</taxon>
        <taxon>Riboviria</taxon>
        <taxon>Orthornavirae</taxon>
        <taxon>Kitrinoviricota</taxon>
        <taxon>Tolucaviricetes</taxon>
        <taxon>Tolivirales</taxon>
        <taxon>Tombusviridae</taxon>
        <taxon>Procedovirinae</taxon>
        <taxon>Alphacarmovirus</taxon>
        <taxon>Alphacarmovirus dianthi</taxon>
    </lineage>
</organism>
<protein>
    <recommendedName>
        <fullName>Capsid protein</fullName>
    </recommendedName>
    <alternativeName>
        <fullName>Coat protein</fullName>
    </alternativeName>
    <alternativeName>
        <fullName>p38</fullName>
    </alternativeName>
</protein>
<name>CAPSD_CARMS</name>
<organismHost>
    <name type="scientific">Dianthus barbatus</name>
    <dbReference type="NCBI Taxonomy" id="278075"/>
</organismHost>
<organismHost>
    <name type="scientific">Dianthus caryophyllus</name>
    <name type="common">Carnation</name>
    <name type="synonym">Clove pink</name>
    <dbReference type="NCBI Taxonomy" id="3570"/>
</organismHost>
<organismHost>
    <name type="scientific">Dianthus chinensis</name>
    <dbReference type="NCBI Taxonomy" id="118431"/>
</organismHost>
<organismHost>
    <name type="scientific">Dianthus superbus</name>
    <dbReference type="NCBI Taxonomy" id="288950"/>
</organismHost>
<organismHost>
    <name type="scientific">Saponaria officinalis</name>
    <name type="common">Common soapwort</name>
    <name type="synonym">Lychnis saponaria</name>
    <dbReference type="NCBI Taxonomy" id="3572"/>
</organismHost>
<feature type="chain" id="PRO_0000398301" description="Capsid protein">
    <location>
        <begin position="1"/>
        <end position="348"/>
    </location>
</feature>
<feature type="region of interest" description="Disordered" evidence="2">
    <location>
        <begin position="58"/>
        <end position="84"/>
    </location>
</feature>
<feature type="region of interest" description="S domain, virion shell">
    <location>
        <begin position="82"/>
        <end position="239"/>
    </location>
</feature>
<feature type="region of interest" description="P domain, projecting">
    <location>
        <begin position="240"/>
        <end position="348"/>
    </location>
</feature>
<feature type="compositionally biased region" description="Polar residues" evidence="2">
    <location>
        <begin position="64"/>
        <end position="84"/>
    </location>
</feature>
<sequence>MENKGEKIAMNPTVQTLAQKGDKLAVKLVTRGWASLSTNQKRRAEMLAGYTPAILAFTPRRPRMTNSPPRTSRNSPGQAGKSMTMSKTELLCTVKGTTGVIPSFEDWVVSPRNVAVFPQLSLLATNFNKYRITALTVKYSPACSFETNGRVALGFNDDASDTPPTTKVGFYDLGKHVETAAQTAKDLVIPVDGKTRFIRDSASDDAKLVDFGRLVLSTYGFDKADTVVGELFIQYTIVLSDPTKTAKISQASNDKVSDGPTYVVPSVNGNELQLRVVAAGKWCIIVRGTVEGGFTKPTLIGPGISGDVDYESARPIAICELVTQMEGQMLKITKTSAEQPLKVVVYRM</sequence>
<reference key="1">
    <citation type="submission" date="1999-10" db="EMBL/GenBank/DDBJ databases">
        <title>Infectivity of full-length cDNA of carnation mottle virus.</title>
        <authorList>
            <person name="Zhang A.P."/>
            <person name="Yue Y."/>
            <person name="Ye R."/>
            <person name="Zhu H.Q."/>
            <person name="Xu L."/>
            <person name="Yu S.Q."/>
        </authorList>
    </citation>
    <scope>NUCLEOTIDE SEQUENCE [GENOMIC RNA]</scope>
</reference>
<gene>
    <name type="ORF">ORF4</name>
</gene>
<accession>Q9Q6X7</accession>
<evidence type="ECO:0000250" key="1"/>
<evidence type="ECO:0000256" key="2">
    <source>
        <dbReference type="SAM" id="MobiDB-lite"/>
    </source>
</evidence>
<evidence type="ECO:0000305" key="3"/>
<comment type="function">
    <text evidence="1">Capsid protein self-assembles to form an icosahedral capsid with a T=3 symmetry, about 32-35 nm in diameter, and consisting of 180 capsid proteins. Also acts as a suppressor of RNA-mediated gene silencing, also known as post-transcriptional gene silencing (PTGS), a mechanism of plant viral defense that limits the accumulation of viral RNAs (By similarity).</text>
</comment>
<comment type="cofactor">
    <cofactor evidence="1">
        <name>Ca(2+)</name>
        <dbReference type="ChEBI" id="CHEBI:29108"/>
    </cofactor>
    <text evidence="1">Binds Ca(2+). Ca(2+) probably promotes virus assembly and stabilizes the virus particle.</text>
</comment>
<comment type="subunit">
    <text evidence="1">Homodimer. Homomultimer.</text>
</comment>
<comment type="subcellular location">
    <subcellularLocation>
        <location evidence="1">Virion</location>
    </subcellularLocation>
</comment>
<comment type="similarity">
    <text evidence="3">Belongs to the icosahedral plant coat protein family.</text>
</comment>
<keyword id="KW-0106">Calcium</keyword>
<keyword id="KW-0167">Capsid protein</keyword>
<keyword id="KW-1185">Reference proteome</keyword>
<keyword id="KW-0694">RNA-binding</keyword>
<keyword id="KW-1142">T=3 icosahedral capsid protein</keyword>
<keyword id="KW-0946">Virion</keyword>
<dbReference type="EMBL" id="AF192772">
    <property type="protein sequence ID" value="AAF15526.1"/>
    <property type="molecule type" value="Genomic_RNA"/>
</dbReference>
<dbReference type="SMR" id="Q9Q6X7"/>
<dbReference type="Proteomes" id="UP000006709">
    <property type="component" value="Genome"/>
</dbReference>
<dbReference type="GO" id="GO:0039617">
    <property type="term" value="C:T=3 icosahedral viral capsid"/>
    <property type="evidence" value="ECO:0007669"/>
    <property type="project" value="UniProtKB-KW"/>
</dbReference>
<dbReference type="GO" id="GO:0003723">
    <property type="term" value="F:RNA binding"/>
    <property type="evidence" value="ECO:0007669"/>
    <property type="project" value="UniProtKB-KW"/>
</dbReference>
<dbReference type="GO" id="GO:0005198">
    <property type="term" value="F:structural molecule activity"/>
    <property type="evidence" value="ECO:0007669"/>
    <property type="project" value="InterPro"/>
</dbReference>
<dbReference type="Gene3D" id="2.60.120.20">
    <property type="match status" value="1"/>
</dbReference>
<dbReference type="Gene3D" id="2.60.40.1780">
    <property type="entry name" value="Carmovirus coat protein"/>
    <property type="match status" value="1"/>
</dbReference>
<dbReference type="InterPro" id="IPR000937">
    <property type="entry name" value="Capsid_prot_S-dom_vir"/>
</dbReference>
<dbReference type="InterPro" id="IPR013669">
    <property type="entry name" value="Coat_prot_C_Carmovir"/>
</dbReference>
<dbReference type="InterPro" id="IPR029053">
    <property type="entry name" value="Viral_coat"/>
</dbReference>
<dbReference type="Pfam" id="PF08462">
    <property type="entry name" value="Carmo_coat_C"/>
    <property type="match status" value="1"/>
</dbReference>
<dbReference type="Pfam" id="PF00729">
    <property type="entry name" value="Viral_coat"/>
    <property type="match status" value="1"/>
</dbReference>
<dbReference type="PRINTS" id="PR00233">
    <property type="entry name" value="ICOSAHEDRAL"/>
</dbReference>
<dbReference type="SUPFAM" id="SSF88633">
    <property type="entry name" value="Positive stranded ssRNA viruses"/>
    <property type="match status" value="1"/>
</dbReference>
<dbReference type="PROSITE" id="PS00555">
    <property type="entry name" value="ICOSAH_VIR_COAT_S"/>
    <property type="match status" value="1"/>
</dbReference>
<proteinExistence type="inferred from homology"/>